<proteinExistence type="inferred from homology"/>
<sequence length="205" mass="22956">MELNGLRVSRETQARLQHFAALFQKWAKTINLVAPSTLDDLWHRHIADSSQIFQICPEPIRWADLGSGGGFPGVITAIFLAELQDGWAHLVESNHKKAAFLMTALRETEARGSVHAIRIEDAPAEIGECGAISARALADLDGLIGYAAPWMLGKENCRGFFHKGRDYLREIDEARGRWEFDLVEHKSAVEQESVILEISNLRRLV</sequence>
<organism>
    <name type="scientific">Rhizobium etli (strain CIAT 652)</name>
    <dbReference type="NCBI Taxonomy" id="491916"/>
    <lineage>
        <taxon>Bacteria</taxon>
        <taxon>Pseudomonadati</taxon>
        <taxon>Pseudomonadota</taxon>
        <taxon>Alphaproteobacteria</taxon>
        <taxon>Hyphomicrobiales</taxon>
        <taxon>Rhizobiaceae</taxon>
        <taxon>Rhizobium/Agrobacterium group</taxon>
        <taxon>Rhizobium</taxon>
    </lineage>
</organism>
<evidence type="ECO:0000255" key="1">
    <source>
        <dbReference type="HAMAP-Rule" id="MF_00074"/>
    </source>
</evidence>
<dbReference type="EC" id="2.1.1.170" evidence="1"/>
<dbReference type="EMBL" id="CP001074">
    <property type="protein sequence ID" value="ACE93341.1"/>
    <property type="molecule type" value="Genomic_DNA"/>
</dbReference>
<dbReference type="SMR" id="B3PS51"/>
<dbReference type="KEGG" id="rec:RHECIAT_CH0004414"/>
<dbReference type="eggNOG" id="COG0357">
    <property type="taxonomic scope" value="Bacteria"/>
</dbReference>
<dbReference type="HOGENOM" id="CLU_065341_1_1_5"/>
<dbReference type="Proteomes" id="UP000008817">
    <property type="component" value="Chromosome"/>
</dbReference>
<dbReference type="GO" id="GO:0005829">
    <property type="term" value="C:cytosol"/>
    <property type="evidence" value="ECO:0007669"/>
    <property type="project" value="TreeGrafter"/>
</dbReference>
<dbReference type="GO" id="GO:0070043">
    <property type="term" value="F:rRNA (guanine-N7-)-methyltransferase activity"/>
    <property type="evidence" value="ECO:0007669"/>
    <property type="project" value="UniProtKB-UniRule"/>
</dbReference>
<dbReference type="Gene3D" id="3.40.50.150">
    <property type="entry name" value="Vaccinia Virus protein VP39"/>
    <property type="match status" value="1"/>
</dbReference>
<dbReference type="HAMAP" id="MF_00074">
    <property type="entry name" value="16SrRNA_methyltr_G"/>
    <property type="match status" value="1"/>
</dbReference>
<dbReference type="InterPro" id="IPR003682">
    <property type="entry name" value="rRNA_ssu_MeTfrase_G"/>
</dbReference>
<dbReference type="InterPro" id="IPR029063">
    <property type="entry name" value="SAM-dependent_MTases_sf"/>
</dbReference>
<dbReference type="PANTHER" id="PTHR31760">
    <property type="entry name" value="S-ADENOSYL-L-METHIONINE-DEPENDENT METHYLTRANSFERASES SUPERFAMILY PROTEIN"/>
    <property type="match status" value="1"/>
</dbReference>
<dbReference type="PANTHER" id="PTHR31760:SF0">
    <property type="entry name" value="S-ADENOSYL-L-METHIONINE-DEPENDENT METHYLTRANSFERASES SUPERFAMILY PROTEIN"/>
    <property type="match status" value="1"/>
</dbReference>
<dbReference type="Pfam" id="PF02527">
    <property type="entry name" value="GidB"/>
    <property type="match status" value="1"/>
</dbReference>
<dbReference type="PIRSF" id="PIRSF003078">
    <property type="entry name" value="GidB"/>
    <property type="match status" value="1"/>
</dbReference>
<dbReference type="SUPFAM" id="SSF53335">
    <property type="entry name" value="S-adenosyl-L-methionine-dependent methyltransferases"/>
    <property type="match status" value="1"/>
</dbReference>
<comment type="function">
    <text evidence="1">Specifically methylates the N7 position of guanine in position 527 of 16S rRNA.</text>
</comment>
<comment type="catalytic activity">
    <reaction evidence="1">
        <text>guanosine(527) in 16S rRNA + S-adenosyl-L-methionine = N(7)-methylguanosine(527) in 16S rRNA + S-adenosyl-L-homocysteine</text>
        <dbReference type="Rhea" id="RHEA:42732"/>
        <dbReference type="Rhea" id="RHEA-COMP:10209"/>
        <dbReference type="Rhea" id="RHEA-COMP:10210"/>
        <dbReference type="ChEBI" id="CHEBI:57856"/>
        <dbReference type="ChEBI" id="CHEBI:59789"/>
        <dbReference type="ChEBI" id="CHEBI:74269"/>
        <dbReference type="ChEBI" id="CHEBI:74480"/>
        <dbReference type="EC" id="2.1.1.170"/>
    </reaction>
</comment>
<comment type="subcellular location">
    <subcellularLocation>
        <location evidence="1">Cytoplasm</location>
    </subcellularLocation>
</comment>
<comment type="similarity">
    <text evidence="1">Belongs to the methyltransferase superfamily. RNA methyltransferase RsmG family.</text>
</comment>
<accession>B3PS51</accession>
<gene>
    <name evidence="1" type="primary">rsmG</name>
    <name type="ordered locus">RHECIAT_CH0004414</name>
</gene>
<feature type="chain" id="PRO_1000092643" description="Ribosomal RNA small subunit methyltransferase G">
    <location>
        <begin position="1"/>
        <end position="205"/>
    </location>
</feature>
<feature type="binding site" evidence="1">
    <location>
        <position position="66"/>
    </location>
    <ligand>
        <name>S-adenosyl-L-methionine</name>
        <dbReference type="ChEBI" id="CHEBI:59789"/>
    </ligand>
</feature>
<feature type="binding site" evidence="1">
    <location>
        <position position="71"/>
    </location>
    <ligand>
        <name>S-adenosyl-L-methionine</name>
        <dbReference type="ChEBI" id="CHEBI:59789"/>
    </ligand>
</feature>
<feature type="binding site" evidence="1">
    <location>
        <begin position="119"/>
        <end position="120"/>
    </location>
    <ligand>
        <name>S-adenosyl-L-methionine</name>
        <dbReference type="ChEBI" id="CHEBI:59789"/>
    </ligand>
</feature>
<feature type="binding site" evidence="1">
    <location>
        <position position="135"/>
    </location>
    <ligand>
        <name>S-adenosyl-L-methionine</name>
        <dbReference type="ChEBI" id="CHEBI:59789"/>
    </ligand>
</feature>
<keyword id="KW-0963">Cytoplasm</keyword>
<keyword id="KW-0489">Methyltransferase</keyword>
<keyword id="KW-0698">rRNA processing</keyword>
<keyword id="KW-0949">S-adenosyl-L-methionine</keyword>
<keyword id="KW-0808">Transferase</keyword>
<reference key="1">
    <citation type="journal article" date="2010" name="Appl. Environ. Microbiol.">
        <title>Conserved symbiotic plasmid DNA sequences in the multireplicon pangenomic structure of Rhizobium etli.</title>
        <authorList>
            <person name="Gonzalez V."/>
            <person name="Acosta J.L."/>
            <person name="Santamaria R.I."/>
            <person name="Bustos P."/>
            <person name="Fernandez J.L."/>
            <person name="Hernandez Gonzalez I.L."/>
            <person name="Diaz R."/>
            <person name="Flores M."/>
            <person name="Palacios R."/>
            <person name="Mora J."/>
            <person name="Davila G."/>
        </authorList>
    </citation>
    <scope>NUCLEOTIDE SEQUENCE [LARGE SCALE GENOMIC DNA]</scope>
    <source>
        <strain>CIAT 652</strain>
    </source>
</reference>
<protein>
    <recommendedName>
        <fullName evidence="1">Ribosomal RNA small subunit methyltransferase G</fullName>
        <ecNumber evidence="1">2.1.1.170</ecNumber>
    </recommendedName>
    <alternativeName>
        <fullName evidence="1">16S rRNA 7-methylguanosine methyltransferase</fullName>
        <shortName evidence="1">16S rRNA m7G methyltransferase</shortName>
    </alternativeName>
</protein>
<name>RSMG_RHIE6</name>